<reference key="1">
    <citation type="journal article" date="2005" name="J. Bacteriol.">
        <title>Swine and poultry pathogens: the complete genome sequences of two strains of Mycoplasma hyopneumoniae and a strain of Mycoplasma synoviae.</title>
        <authorList>
            <person name="Vasconcelos A.T.R."/>
            <person name="Ferreira H.B."/>
            <person name="Bizarro C.V."/>
            <person name="Bonatto S.L."/>
            <person name="Carvalho M.O."/>
            <person name="Pinto P.M."/>
            <person name="Almeida D.F."/>
            <person name="Almeida L.G.P."/>
            <person name="Almeida R."/>
            <person name="Alves-Junior L."/>
            <person name="Assuncao E.N."/>
            <person name="Azevedo V.A.C."/>
            <person name="Bogo M.R."/>
            <person name="Brigido M.M."/>
            <person name="Brocchi M."/>
            <person name="Burity H.A."/>
            <person name="Camargo A.A."/>
            <person name="Camargo S.S."/>
            <person name="Carepo M.S."/>
            <person name="Carraro D.M."/>
            <person name="de Mattos Cascardo J.C."/>
            <person name="Castro L.A."/>
            <person name="Cavalcanti G."/>
            <person name="Chemale G."/>
            <person name="Collevatti R.G."/>
            <person name="Cunha C.W."/>
            <person name="Dallagiovanna B."/>
            <person name="Dambros B.P."/>
            <person name="Dellagostin O.A."/>
            <person name="Falcao C."/>
            <person name="Fantinatti-Garboggini F."/>
            <person name="Felipe M.S.S."/>
            <person name="Fiorentin L."/>
            <person name="Franco G.R."/>
            <person name="Freitas N.S.A."/>
            <person name="Frias D."/>
            <person name="Grangeiro T.B."/>
            <person name="Grisard E.C."/>
            <person name="Guimaraes C.T."/>
            <person name="Hungria M."/>
            <person name="Jardim S.N."/>
            <person name="Krieger M.A."/>
            <person name="Laurino J.P."/>
            <person name="Lima L.F.A."/>
            <person name="Lopes M.I."/>
            <person name="Loreto E.L.S."/>
            <person name="Madeira H.M.F."/>
            <person name="Manfio G.P."/>
            <person name="Maranhao A.Q."/>
            <person name="Martinkovics C.T."/>
            <person name="Medeiros S.R.B."/>
            <person name="Moreira M.A.M."/>
            <person name="Neiva M."/>
            <person name="Ramalho-Neto C.E."/>
            <person name="Nicolas M.F."/>
            <person name="Oliveira S.C."/>
            <person name="Paixao R.F.C."/>
            <person name="Pedrosa F.O."/>
            <person name="Pena S.D.J."/>
            <person name="Pereira M."/>
            <person name="Pereira-Ferrari L."/>
            <person name="Piffer I."/>
            <person name="Pinto L.S."/>
            <person name="Potrich D.P."/>
            <person name="Salim A.C.M."/>
            <person name="Santos F.R."/>
            <person name="Schmitt R."/>
            <person name="Schneider M.P.C."/>
            <person name="Schrank A."/>
            <person name="Schrank I.S."/>
            <person name="Schuck A.F."/>
            <person name="Seuanez H.N."/>
            <person name="Silva D.W."/>
            <person name="Silva R."/>
            <person name="Silva S.C."/>
            <person name="Soares C.M.A."/>
            <person name="Souza K.R.L."/>
            <person name="Souza R.C."/>
            <person name="Staats C.C."/>
            <person name="Steffens M.B.R."/>
            <person name="Teixeira S.M.R."/>
            <person name="Urmenyi T.P."/>
            <person name="Vainstein M.H."/>
            <person name="Zuccherato L.W."/>
            <person name="Simpson A.J.G."/>
            <person name="Zaha A."/>
        </authorList>
    </citation>
    <scope>NUCLEOTIDE SEQUENCE [LARGE SCALE GENOMIC DNA]</scope>
    <source>
        <strain>7448</strain>
    </source>
</reference>
<sequence length="231" mass="25601">MKKVSRNLLQARQMVDKNRFYSLEEAMELVKKTSYTKFSGSVDLAIRLNLDTRKADQQLRGAVVLPHGTGKSVRVLVATDSSEVAAKSLEAGADLIYSTAELEQNLKIDNFNFDVIVVEPKLMPILGRYGKKLGPKGLMPNPKTGTVSPNPEKAVAEIKKGKANYRADRYGIIHSLIGKTNMEVPQLVENANTLLRLIKRLKPNTVKGNYFKNLTVSASMGPSIKIRFDNL</sequence>
<proteinExistence type="inferred from homology"/>
<name>RL1_MESH7</name>
<keyword id="KW-0678">Repressor</keyword>
<keyword id="KW-0687">Ribonucleoprotein</keyword>
<keyword id="KW-0689">Ribosomal protein</keyword>
<keyword id="KW-0694">RNA-binding</keyword>
<keyword id="KW-0699">rRNA-binding</keyword>
<keyword id="KW-0810">Translation regulation</keyword>
<keyword id="KW-0820">tRNA-binding</keyword>
<feature type="chain" id="PRO_0000230614" description="Large ribosomal subunit protein uL1">
    <location>
        <begin position="1"/>
        <end position="231"/>
    </location>
</feature>
<accession>Q4A7R3</accession>
<comment type="function">
    <text evidence="1">Binds directly to 23S rRNA. The L1 stalk is quite mobile in the ribosome, and is involved in E site tRNA release.</text>
</comment>
<comment type="function">
    <text evidence="1">Protein L1 is also a translational repressor protein, it controls the translation of the L11 operon by binding to its mRNA.</text>
</comment>
<comment type="subunit">
    <text evidence="1">Part of the 50S ribosomal subunit.</text>
</comment>
<comment type="similarity">
    <text evidence="1">Belongs to the universal ribosomal protein uL1 family.</text>
</comment>
<protein>
    <recommendedName>
        <fullName evidence="1">Large ribosomal subunit protein uL1</fullName>
    </recommendedName>
    <alternativeName>
        <fullName evidence="2">50S ribosomal protein L1</fullName>
    </alternativeName>
</protein>
<evidence type="ECO:0000255" key="1">
    <source>
        <dbReference type="HAMAP-Rule" id="MF_01318"/>
    </source>
</evidence>
<evidence type="ECO:0000305" key="2"/>
<dbReference type="EMBL" id="AE017244">
    <property type="protein sequence ID" value="AAZ53826.1"/>
    <property type="molecule type" value="Genomic_DNA"/>
</dbReference>
<dbReference type="RefSeq" id="WP_011206292.1">
    <property type="nucleotide sequence ID" value="NC_007332.1"/>
</dbReference>
<dbReference type="SMR" id="Q4A7R3"/>
<dbReference type="GeneID" id="41334755"/>
<dbReference type="KEGG" id="mhp:MHP7448_0459"/>
<dbReference type="HOGENOM" id="CLU_062853_0_0_14"/>
<dbReference type="Proteomes" id="UP000000553">
    <property type="component" value="Chromosome"/>
</dbReference>
<dbReference type="GO" id="GO:0015934">
    <property type="term" value="C:large ribosomal subunit"/>
    <property type="evidence" value="ECO:0007669"/>
    <property type="project" value="InterPro"/>
</dbReference>
<dbReference type="GO" id="GO:0019843">
    <property type="term" value="F:rRNA binding"/>
    <property type="evidence" value="ECO:0007669"/>
    <property type="project" value="UniProtKB-UniRule"/>
</dbReference>
<dbReference type="GO" id="GO:0003735">
    <property type="term" value="F:structural constituent of ribosome"/>
    <property type="evidence" value="ECO:0007669"/>
    <property type="project" value="InterPro"/>
</dbReference>
<dbReference type="GO" id="GO:0000049">
    <property type="term" value="F:tRNA binding"/>
    <property type="evidence" value="ECO:0007669"/>
    <property type="project" value="UniProtKB-KW"/>
</dbReference>
<dbReference type="GO" id="GO:0006417">
    <property type="term" value="P:regulation of translation"/>
    <property type="evidence" value="ECO:0007669"/>
    <property type="project" value="UniProtKB-KW"/>
</dbReference>
<dbReference type="GO" id="GO:0006412">
    <property type="term" value="P:translation"/>
    <property type="evidence" value="ECO:0007669"/>
    <property type="project" value="UniProtKB-UniRule"/>
</dbReference>
<dbReference type="CDD" id="cd00403">
    <property type="entry name" value="Ribosomal_L1"/>
    <property type="match status" value="1"/>
</dbReference>
<dbReference type="FunFam" id="3.40.50.790:FF:000001">
    <property type="entry name" value="50S ribosomal protein L1"/>
    <property type="match status" value="1"/>
</dbReference>
<dbReference type="Gene3D" id="3.30.190.20">
    <property type="match status" value="1"/>
</dbReference>
<dbReference type="Gene3D" id="3.40.50.790">
    <property type="match status" value="1"/>
</dbReference>
<dbReference type="HAMAP" id="MF_01318_B">
    <property type="entry name" value="Ribosomal_uL1_B"/>
    <property type="match status" value="1"/>
</dbReference>
<dbReference type="InterPro" id="IPR005878">
    <property type="entry name" value="Ribosom_uL1_bac-type"/>
</dbReference>
<dbReference type="InterPro" id="IPR002143">
    <property type="entry name" value="Ribosomal_uL1"/>
</dbReference>
<dbReference type="InterPro" id="IPR023674">
    <property type="entry name" value="Ribosomal_uL1-like"/>
</dbReference>
<dbReference type="InterPro" id="IPR028364">
    <property type="entry name" value="Ribosomal_uL1/biogenesis"/>
</dbReference>
<dbReference type="InterPro" id="IPR016095">
    <property type="entry name" value="Ribosomal_uL1_3-a/b-sand"/>
</dbReference>
<dbReference type="InterPro" id="IPR023673">
    <property type="entry name" value="Ribosomal_uL1_CS"/>
</dbReference>
<dbReference type="NCBIfam" id="TIGR01169">
    <property type="entry name" value="rplA_bact"/>
    <property type="match status" value="1"/>
</dbReference>
<dbReference type="PANTHER" id="PTHR36427">
    <property type="entry name" value="54S RIBOSOMAL PROTEIN L1, MITOCHONDRIAL"/>
    <property type="match status" value="1"/>
</dbReference>
<dbReference type="PANTHER" id="PTHR36427:SF3">
    <property type="entry name" value="LARGE RIBOSOMAL SUBUNIT PROTEIN UL1M"/>
    <property type="match status" value="1"/>
</dbReference>
<dbReference type="Pfam" id="PF00687">
    <property type="entry name" value="Ribosomal_L1"/>
    <property type="match status" value="1"/>
</dbReference>
<dbReference type="PIRSF" id="PIRSF002155">
    <property type="entry name" value="Ribosomal_L1"/>
    <property type="match status" value="1"/>
</dbReference>
<dbReference type="SUPFAM" id="SSF56808">
    <property type="entry name" value="Ribosomal protein L1"/>
    <property type="match status" value="1"/>
</dbReference>
<dbReference type="PROSITE" id="PS01199">
    <property type="entry name" value="RIBOSOMAL_L1"/>
    <property type="match status" value="1"/>
</dbReference>
<gene>
    <name evidence="1" type="primary">rplA</name>
    <name type="ordered locus">MHP7448_0459</name>
</gene>
<organism>
    <name type="scientific">Mesomycoplasma hyopneumoniae (strain 7448)</name>
    <name type="common">Mycoplasma hyopneumoniae</name>
    <dbReference type="NCBI Taxonomy" id="262722"/>
    <lineage>
        <taxon>Bacteria</taxon>
        <taxon>Bacillati</taxon>
        <taxon>Mycoplasmatota</taxon>
        <taxon>Mycoplasmoidales</taxon>
        <taxon>Metamycoplasmataceae</taxon>
        <taxon>Mesomycoplasma</taxon>
    </lineage>
</organism>